<gene>
    <name evidence="1" type="primary">ndhC</name>
</gene>
<organism>
    <name type="scientific">Trachelium caeruleum</name>
    <name type="common">Blue throatwort</name>
    <dbReference type="NCBI Taxonomy" id="28494"/>
    <lineage>
        <taxon>Eukaryota</taxon>
        <taxon>Viridiplantae</taxon>
        <taxon>Streptophyta</taxon>
        <taxon>Embryophyta</taxon>
        <taxon>Tracheophyta</taxon>
        <taxon>Spermatophyta</taxon>
        <taxon>Magnoliopsida</taxon>
        <taxon>eudicotyledons</taxon>
        <taxon>Gunneridae</taxon>
        <taxon>Pentapetalae</taxon>
        <taxon>asterids</taxon>
        <taxon>campanulids</taxon>
        <taxon>Asterales</taxon>
        <taxon>Campanulaceae</taxon>
        <taxon>Trachelium</taxon>
    </lineage>
</organism>
<comment type="function">
    <text evidence="1">NDH shuttles electrons from NAD(P)H:plastoquinone, via FMN and iron-sulfur (Fe-S) centers, to quinones in the photosynthetic chain and possibly in a chloroplast respiratory chain. The immediate electron acceptor for the enzyme in this species is believed to be plastoquinone. Couples the redox reaction to proton translocation, and thus conserves the redox energy in a proton gradient.</text>
</comment>
<comment type="catalytic activity">
    <reaction evidence="1">
        <text>a plastoquinone + NADH + (n+1) H(+)(in) = a plastoquinol + NAD(+) + n H(+)(out)</text>
        <dbReference type="Rhea" id="RHEA:42608"/>
        <dbReference type="Rhea" id="RHEA-COMP:9561"/>
        <dbReference type="Rhea" id="RHEA-COMP:9562"/>
        <dbReference type="ChEBI" id="CHEBI:15378"/>
        <dbReference type="ChEBI" id="CHEBI:17757"/>
        <dbReference type="ChEBI" id="CHEBI:57540"/>
        <dbReference type="ChEBI" id="CHEBI:57945"/>
        <dbReference type="ChEBI" id="CHEBI:62192"/>
    </reaction>
</comment>
<comment type="catalytic activity">
    <reaction evidence="1">
        <text>a plastoquinone + NADPH + (n+1) H(+)(in) = a plastoquinol + NADP(+) + n H(+)(out)</text>
        <dbReference type="Rhea" id="RHEA:42612"/>
        <dbReference type="Rhea" id="RHEA-COMP:9561"/>
        <dbReference type="Rhea" id="RHEA-COMP:9562"/>
        <dbReference type="ChEBI" id="CHEBI:15378"/>
        <dbReference type="ChEBI" id="CHEBI:17757"/>
        <dbReference type="ChEBI" id="CHEBI:57783"/>
        <dbReference type="ChEBI" id="CHEBI:58349"/>
        <dbReference type="ChEBI" id="CHEBI:62192"/>
    </reaction>
</comment>
<comment type="subunit">
    <text evidence="1">NDH is composed of at least 16 different subunits, 5 of which are encoded in the nucleus.</text>
</comment>
<comment type="subcellular location">
    <subcellularLocation>
        <location evidence="1">Plastid</location>
        <location evidence="1">Chloroplast thylakoid membrane</location>
        <topology evidence="1">Multi-pass membrane protein</topology>
    </subcellularLocation>
</comment>
<comment type="similarity">
    <text evidence="1">Belongs to the complex I subunit 3 family.</text>
</comment>
<sequence length="120" mass="13874">MLLLYEYDIFWAFLIISSLIPILAFFLSGVLAPISKGPEKFSSYESGIEPIGDAWLQFRIRYYMFALVFVVFDVETVFLYPWSMSFDVLGVSVFIEAFIFVLILIVGLVYAWRKGALEWS</sequence>
<name>NU3C_TRACE</name>
<geneLocation type="chloroplast"/>
<dbReference type="EC" id="7.1.1.-" evidence="1"/>
<dbReference type="EMBL" id="EU017260">
    <property type="protein sequence ID" value="ABU85667.1"/>
    <property type="molecule type" value="Genomic_DNA"/>
</dbReference>
<dbReference type="EMBL" id="EU090187">
    <property type="protein sequence ID" value="ABV26499.1"/>
    <property type="molecule type" value="Genomic_DNA"/>
</dbReference>
<dbReference type="RefSeq" id="YP_001718674.1">
    <property type="nucleotide sequence ID" value="NC_010442.1"/>
</dbReference>
<dbReference type="SMR" id="A9QC74"/>
<dbReference type="GeneID" id="6155918"/>
<dbReference type="GO" id="GO:0009535">
    <property type="term" value="C:chloroplast thylakoid membrane"/>
    <property type="evidence" value="ECO:0007669"/>
    <property type="project" value="UniProtKB-SubCell"/>
</dbReference>
<dbReference type="GO" id="GO:0030964">
    <property type="term" value="C:NADH dehydrogenase complex"/>
    <property type="evidence" value="ECO:0007669"/>
    <property type="project" value="TreeGrafter"/>
</dbReference>
<dbReference type="GO" id="GO:0008137">
    <property type="term" value="F:NADH dehydrogenase (ubiquinone) activity"/>
    <property type="evidence" value="ECO:0007669"/>
    <property type="project" value="InterPro"/>
</dbReference>
<dbReference type="GO" id="GO:0048038">
    <property type="term" value="F:quinone binding"/>
    <property type="evidence" value="ECO:0007669"/>
    <property type="project" value="UniProtKB-KW"/>
</dbReference>
<dbReference type="GO" id="GO:0019684">
    <property type="term" value="P:photosynthesis, light reaction"/>
    <property type="evidence" value="ECO:0007669"/>
    <property type="project" value="UniProtKB-UniRule"/>
</dbReference>
<dbReference type="FunFam" id="1.20.58.1610:FF:000001">
    <property type="entry name" value="NAD(P)H-quinone oxidoreductase subunit 3, chloroplastic"/>
    <property type="match status" value="1"/>
</dbReference>
<dbReference type="Gene3D" id="1.20.58.1610">
    <property type="entry name" value="NADH:ubiquinone/plastoquinone oxidoreductase, chain 3"/>
    <property type="match status" value="1"/>
</dbReference>
<dbReference type="HAMAP" id="MF_01394">
    <property type="entry name" value="NDH1_NuoA"/>
    <property type="match status" value="1"/>
</dbReference>
<dbReference type="InterPro" id="IPR023043">
    <property type="entry name" value="NAD(P)H_OxRDtase_bac/plastid"/>
</dbReference>
<dbReference type="InterPro" id="IPR000440">
    <property type="entry name" value="NADH_UbQ/plastoQ_OxRdtase_su3"/>
</dbReference>
<dbReference type="InterPro" id="IPR038430">
    <property type="entry name" value="NDAH_ubi_oxred_su3_sf"/>
</dbReference>
<dbReference type="PANTHER" id="PTHR11058">
    <property type="entry name" value="NADH-UBIQUINONE OXIDOREDUCTASE CHAIN 3"/>
    <property type="match status" value="1"/>
</dbReference>
<dbReference type="PANTHER" id="PTHR11058:SF9">
    <property type="entry name" value="NADH-UBIQUINONE OXIDOREDUCTASE CHAIN 3"/>
    <property type="match status" value="1"/>
</dbReference>
<dbReference type="Pfam" id="PF00507">
    <property type="entry name" value="Oxidored_q4"/>
    <property type="match status" value="1"/>
</dbReference>
<reference key="1">
    <citation type="journal article" date="2007" name="Proc. Natl. Acad. Sci. U.S.A.">
        <title>Analysis of 81 genes from 64 plastid genomes resolves relationships in angiosperms and identifies genome-scale evolutionary patterns.</title>
        <authorList>
            <person name="Jansen R.K."/>
            <person name="Cai Z."/>
            <person name="Raubeson L.A."/>
            <person name="Daniell H."/>
            <person name="dePamphilis C.W."/>
            <person name="Leebens-Mack J."/>
            <person name="Muller K.F."/>
            <person name="Guisinger-Bellian M."/>
            <person name="Haberle R.C."/>
            <person name="Hansen A.K."/>
            <person name="Chumley T.W."/>
            <person name="Lee S.B."/>
            <person name="Peery R."/>
            <person name="McNeal J.R."/>
            <person name="Kuehl J.V."/>
            <person name="Boore J.L."/>
        </authorList>
    </citation>
    <scope>NUCLEOTIDE SEQUENCE [GENOMIC DNA]</scope>
</reference>
<reference key="2">
    <citation type="journal article" date="2008" name="J. Mol. Evol.">
        <title>Extensive rearrangements in the chloroplast genome of Trachelium caeruleum are associated with repeats and tRNA genes.</title>
        <authorList>
            <person name="Haberle R.C."/>
            <person name="Fourcade H.M."/>
            <person name="Boore J.L."/>
            <person name="Jansen R.K."/>
        </authorList>
    </citation>
    <scope>NUCLEOTIDE SEQUENCE [LARGE SCALE GENOMIC DNA]</scope>
</reference>
<evidence type="ECO:0000255" key="1">
    <source>
        <dbReference type="HAMAP-Rule" id="MF_01394"/>
    </source>
</evidence>
<protein>
    <recommendedName>
        <fullName evidence="1">NAD(P)H-quinone oxidoreductase subunit 3, chloroplastic</fullName>
        <ecNumber evidence="1">7.1.1.-</ecNumber>
    </recommendedName>
    <alternativeName>
        <fullName evidence="1">NAD(P)H dehydrogenase subunit 3</fullName>
    </alternativeName>
    <alternativeName>
        <fullName evidence="1">NADH-plastoquinone oxidoreductase subunit 3</fullName>
    </alternativeName>
</protein>
<feature type="chain" id="PRO_0000362875" description="NAD(P)H-quinone oxidoreductase subunit 3, chloroplastic">
    <location>
        <begin position="1"/>
        <end position="120"/>
    </location>
</feature>
<feature type="transmembrane region" description="Helical" evidence="1">
    <location>
        <begin position="9"/>
        <end position="29"/>
    </location>
</feature>
<feature type="transmembrane region" description="Helical" evidence="1">
    <location>
        <begin position="62"/>
        <end position="82"/>
    </location>
</feature>
<feature type="transmembrane region" description="Helical" evidence="1">
    <location>
        <begin position="88"/>
        <end position="108"/>
    </location>
</feature>
<accession>A9QC74</accession>
<keyword id="KW-0150">Chloroplast</keyword>
<keyword id="KW-0472">Membrane</keyword>
<keyword id="KW-0520">NAD</keyword>
<keyword id="KW-0521">NADP</keyword>
<keyword id="KW-0934">Plastid</keyword>
<keyword id="KW-0618">Plastoquinone</keyword>
<keyword id="KW-0874">Quinone</keyword>
<keyword id="KW-0793">Thylakoid</keyword>
<keyword id="KW-1278">Translocase</keyword>
<keyword id="KW-0812">Transmembrane</keyword>
<keyword id="KW-1133">Transmembrane helix</keyword>
<keyword id="KW-0813">Transport</keyword>
<proteinExistence type="inferred from homology"/>